<feature type="signal peptide" evidence="1">
    <location>
        <begin position="1"/>
        <end position="22"/>
    </location>
</feature>
<feature type="chain" id="PRO_0000041785" description="Flagellar P-ring protein">
    <location>
        <begin position="23"/>
        <end position="368"/>
    </location>
</feature>
<evidence type="ECO:0000255" key="1">
    <source>
        <dbReference type="HAMAP-Rule" id="MF_00416"/>
    </source>
</evidence>
<evidence type="ECO:0000305" key="2"/>
<organism>
    <name type="scientific">Bordetella parapertussis (strain 12822 / ATCC BAA-587 / NCTC 13253)</name>
    <dbReference type="NCBI Taxonomy" id="257311"/>
    <lineage>
        <taxon>Bacteria</taxon>
        <taxon>Pseudomonadati</taxon>
        <taxon>Pseudomonadota</taxon>
        <taxon>Betaproteobacteria</taxon>
        <taxon>Burkholderiales</taxon>
        <taxon>Alcaligenaceae</taxon>
        <taxon>Bordetella</taxon>
    </lineage>
</organism>
<sequence length="368" mass="38145">MLIPLARAVLALALLGAGAAHAERLKDLASIQGVRGNQLIGYGLVVGLDGSGDQVRQTPFTQQSLTNMLSQLGITVPQGSNMQLKNVAAVMVTATLPSFARPGQTVDVVVSSMGNAKSLRGGTLLMTPLKGADNQVYAIAQGNLLVGGAGASAGGSSVQINQLNGGRISNGAIVERAVPTMYAQDGTVYLEMNNTDFGTTQNAAAAINRQFGAGTAMALDGRVIQVRGPLDPSMMPAFMSQVENLQVARAPATAKVIINARTGSVVMNRTVMIEEAAVAHGNLSVIINRQNQVFQPDTPFTEGQTVVVPNTQIEVRQDGGALQRVTTSANLADVVKALNALGATPQDLLAILQAMKTAGALRADLEII</sequence>
<gene>
    <name evidence="1" type="primary">flgI</name>
    <name type="ordered locus">BPP1492</name>
</gene>
<accession>Q7WA91</accession>
<dbReference type="EMBL" id="BX640427">
    <property type="protein sequence ID" value="CAE36794.1"/>
    <property type="status" value="ALT_INIT"/>
    <property type="molecule type" value="Genomic_DNA"/>
</dbReference>
<dbReference type="SMR" id="Q7WA91"/>
<dbReference type="KEGG" id="bpa:BPP1492"/>
<dbReference type="HOGENOM" id="CLU_045235_1_0_4"/>
<dbReference type="Proteomes" id="UP000001421">
    <property type="component" value="Chromosome"/>
</dbReference>
<dbReference type="GO" id="GO:0009428">
    <property type="term" value="C:bacterial-type flagellum basal body, distal rod, P ring"/>
    <property type="evidence" value="ECO:0007669"/>
    <property type="project" value="InterPro"/>
</dbReference>
<dbReference type="GO" id="GO:0030288">
    <property type="term" value="C:outer membrane-bounded periplasmic space"/>
    <property type="evidence" value="ECO:0007669"/>
    <property type="project" value="InterPro"/>
</dbReference>
<dbReference type="GO" id="GO:0005198">
    <property type="term" value="F:structural molecule activity"/>
    <property type="evidence" value="ECO:0007669"/>
    <property type="project" value="InterPro"/>
</dbReference>
<dbReference type="GO" id="GO:0071973">
    <property type="term" value="P:bacterial-type flagellum-dependent cell motility"/>
    <property type="evidence" value="ECO:0007669"/>
    <property type="project" value="InterPro"/>
</dbReference>
<dbReference type="HAMAP" id="MF_00416">
    <property type="entry name" value="FlgI"/>
    <property type="match status" value="1"/>
</dbReference>
<dbReference type="InterPro" id="IPR001782">
    <property type="entry name" value="Flag_FlgI"/>
</dbReference>
<dbReference type="NCBIfam" id="NF003676">
    <property type="entry name" value="PRK05303.1"/>
    <property type="match status" value="1"/>
</dbReference>
<dbReference type="PANTHER" id="PTHR30381">
    <property type="entry name" value="FLAGELLAR P-RING PERIPLASMIC PROTEIN FLGI"/>
    <property type="match status" value="1"/>
</dbReference>
<dbReference type="PANTHER" id="PTHR30381:SF0">
    <property type="entry name" value="FLAGELLAR P-RING PROTEIN"/>
    <property type="match status" value="1"/>
</dbReference>
<dbReference type="Pfam" id="PF02119">
    <property type="entry name" value="FlgI"/>
    <property type="match status" value="1"/>
</dbReference>
<dbReference type="PRINTS" id="PR01010">
    <property type="entry name" value="FLGPRINGFLGI"/>
</dbReference>
<comment type="function">
    <text evidence="1">Assembles around the rod to form the L-ring and probably protects the motor/basal body from shearing forces during rotation.</text>
</comment>
<comment type="subunit">
    <text evidence="1">The basal body constitutes a major portion of the flagellar organelle and consists of four rings (L,P,S, and M) mounted on a central rod.</text>
</comment>
<comment type="subcellular location">
    <subcellularLocation>
        <location evidence="1">Periplasm</location>
    </subcellularLocation>
    <subcellularLocation>
        <location evidence="1">Bacterial flagellum basal body</location>
    </subcellularLocation>
</comment>
<comment type="similarity">
    <text evidence="1">Belongs to the FlgI family.</text>
</comment>
<comment type="sequence caution" evidence="2">
    <conflict type="erroneous initiation">
        <sequence resource="EMBL-CDS" id="CAE36794"/>
    </conflict>
</comment>
<keyword id="KW-0975">Bacterial flagellum</keyword>
<keyword id="KW-0574">Periplasm</keyword>
<keyword id="KW-0732">Signal</keyword>
<protein>
    <recommendedName>
        <fullName evidence="1">Flagellar P-ring protein</fullName>
    </recommendedName>
    <alternativeName>
        <fullName evidence="1">Basal body P-ring protein</fullName>
    </alternativeName>
</protein>
<reference key="1">
    <citation type="journal article" date="2003" name="Nat. Genet.">
        <title>Comparative analysis of the genome sequences of Bordetella pertussis, Bordetella parapertussis and Bordetella bronchiseptica.</title>
        <authorList>
            <person name="Parkhill J."/>
            <person name="Sebaihia M."/>
            <person name="Preston A."/>
            <person name="Murphy L.D."/>
            <person name="Thomson N.R."/>
            <person name="Harris D.E."/>
            <person name="Holden M.T.G."/>
            <person name="Churcher C.M."/>
            <person name="Bentley S.D."/>
            <person name="Mungall K.L."/>
            <person name="Cerdeno-Tarraga A.-M."/>
            <person name="Temple L."/>
            <person name="James K.D."/>
            <person name="Harris B."/>
            <person name="Quail M.A."/>
            <person name="Achtman M."/>
            <person name="Atkin R."/>
            <person name="Baker S."/>
            <person name="Basham D."/>
            <person name="Bason N."/>
            <person name="Cherevach I."/>
            <person name="Chillingworth T."/>
            <person name="Collins M."/>
            <person name="Cronin A."/>
            <person name="Davis P."/>
            <person name="Doggett J."/>
            <person name="Feltwell T."/>
            <person name="Goble A."/>
            <person name="Hamlin N."/>
            <person name="Hauser H."/>
            <person name="Holroyd S."/>
            <person name="Jagels K."/>
            <person name="Leather S."/>
            <person name="Moule S."/>
            <person name="Norberczak H."/>
            <person name="O'Neil S."/>
            <person name="Ormond D."/>
            <person name="Price C."/>
            <person name="Rabbinowitsch E."/>
            <person name="Rutter S."/>
            <person name="Sanders M."/>
            <person name="Saunders D."/>
            <person name="Seeger K."/>
            <person name="Sharp S."/>
            <person name="Simmonds M."/>
            <person name="Skelton J."/>
            <person name="Squares R."/>
            <person name="Squares S."/>
            <person name="Stevens K."/>
            <person name="Unwin L."/>
            <person name="Whitehead S."/>
            <person name="Barrell B.G."/>
            <person name="Maskell D.J."/>
        </authorList>
    </citation>
    <scope>NUCLEOTIDE SEQUENCE [LARGE SCALE GENOMIC DNA]</scope>
    <source>
        <strain>12822 / ATCC BAA-587 / NCTC 13253</strain>
    </source>
</reference>
<proteinExistence type="inferred from homology"/>
<name>FLGI_BORPA</name>